<accession>A1TF46</accession>
<feature type="chain" id="PRO_0000292309" description="Pyridoxine/pyridoxamine 5'-phosphate oxidase">
    <location>
        <begin position="1"/>
        <end position="222"/>
    </location>
</feature>
<feature type="binding site" evidence="1">
    <location>
        <begin position="11"/>
        <end position="14"/>
    </location>
    <ligand>
        <name>substrate</name>
    </ligand>
</feature>
<feature type="binding site" evidence="1">
    <location>
        <begin position="74"/>
        <end position="79"/>
    </location>
    <ligand>
        <name>FMN</name>
        <dbReference type="ChEBI" id="CHEBI:58210"/>
    </ligand>
</feature>
<feature type="binding site" evidence="1">
    <location>
        <position position="79"/>
    </location>
    <ligand>
        <name>substrate</name>
    </ligand>
</feature>
<feature type="binding site" evidence="1">
    <location>
        <begin position="89"/>
        <end position="90"/>
    </location>
    <ligand>
        <name>FMN</name>
        <dbReference type="ChEBI" id="CHEBI:58210"/>
    </ligand>
</feature>
<feature type="binding site" evidence="1">
    <location>
        <position position="96"/>
    </location>
    <ligand>
        <name>FMN</name>
        <dbReference type="ChEBI" id="CHEBI:58210"/>
    </ligand>
</feature>
<feature type="binding site" evidence="1">
    <location>
        <position position="118"/>
    </location>
    <ligand>
        <name>FMN</name>
        <dbReference type="ChEBI" id="CHEBI:58210"/>
    </ligand>
</feature>
<feature type="binding site" evidence="1">
    <location>
        <position position="136"/>
    </location>
    <ligand>
        <name>substrate</name>
    </ligand>
</feature>
<feature type="binding site" evidence="1">
    <location>
        <position position="140"/>
    </location>
    <ligand>
        <name>substrate</name>
    </ligand>
</feature>
<feature type="binding site" evidence="1">
    <location>
        <position position="144"/>
    </location>
    <ligand>
        <name>substrate</name>
    </ligand>
</feature>
<feature type="binding site" evidence="1">
    <location>
        <begin position="153"/>
        <end position="154"/>
    </location>
    <ligand>
        <name>FMN</name>
        <dbReference type="ChEBI" id="CHEBI:58210"/>
    </ligand>
</feature>
<feature type="binding site" evidence="1">
    <location>
        <position position="199"/>
    </location>
    <ligand>
        <name>FMN</name>
        <dbReference type="ChEBI" id="CHEBI:58210"/>
    </ligand>
</feature>
<feature type="binding site" evidence="1">
    <location>
        <begin position="205"/>
        <end position="207"/>
    </location>
    <ligand>
        <name>substrate</name>
    </ligand>
</feature>
<feature type="binding site" evidence="1">
    <location>
        <position position="209"/>
    </location>
    <ligand>
        <name>FMN</name>
        <dbReference type="ChEBI" id="CHEBI:58210"/>
    </ligand>
</feature>
<name>PDXH_MYCVP</name>
<comment type="function">
    <text evidence="1">Catalyzes the oxidation of either pyridoxine 5'-phosphate (PNP) or pyridoxamine 5'-phosphate (PMP) into pyridoxal 5'-phosphate (PLP).</text>
</comment>
<comment type="catalytic activity">
    <reaction evidence="1">
        <text>pyridoxamine 5'-phosphate + O2 + H2O = pyridoxal 5'-phosphate + H2O2 + NH4(+)</text>
        <dbReference type="Rhea" id="RHEA:15817"/>
        <dbReference type="ChEBI" id="CHEBI:15377"/>
        <dbReference type="ChEBI" id="CHEBI:15379"/>
        <dbReference type="ChEBI" id="CHEBI:16240"/>
        <dbReference type="ChEBI" id="CHEBI:28938"/>
        <dbReference type="ChEBI" id="CHEBI:58451"/>
        <dbReference type="ChEBI" id="CHEBI:597326"/>
        <dbReference type="EC" id="1.4.3.5"/>
    </reaction>
</comment>
<comment type="catalytic activity">
    <reaction evidence="1">
        <text>pyridoxine 5'-phosphate + O2 = pyridoxal 5'-phosphate + H2O2</text>
        <dbReference type="Rhea" id="RHEA:15149"/>
        <dbReference type="ChEBI" id="CHEBI:15379"/>
        <dbReference type="ChEBI" id="CHEBI:16240"/>
        <dbReference type="ChEBI" id="CHEBI:58589"/>
        <dbReference type="ChEBI" id="CHEBI:597326"/>
        <dbReference type="EC" id="1.4.3.5"/>
    </reaction>
</comment>
<comment type="cofactor">
    <cofactor evidence="1">
        <name>FMN</name>
        <dbReference type="ChEBI" id="CHEBI:58210"/>
    </cofactor>
    <text evidence="1">Binds 1 FMN per subunit.</text>
</comment>
<comment type="pathway">
    <text evidence="1">Cofactor metabolism; pyridoxal 5'-phosphate salvage; pyridoxal 5'-phosphate from pyridoxamine 5'-phosphate: step 1/1.</text>
</comment>
<comment type="pathway">
    <text evidence="1">Cofactor metabolism; pyridoxal 5'-phosphate salvage; pyridoxal 5'-phosphate from pyridoxine 5'-phosphate: step 1/1.</text>
</comment>
<comment type="subunit">
    <text evidence="1">Homodimer.</text>
</comment>
<comment type="similarity">
    <text evidence="1">Belongs to the pyridoxamine 5'-phosphate oxidase family.</text>
</comment>
<sequence>MGTSDYLARMRVEYGSVEKDGSSDLDVDWLGPDPATGWVTLLHQWMAEAEQAGAAEPNAMVVATVDDRGRPVTRTVLCKSVDASGVSFYTNYDSEKGRQLAAAPYASATFPWYLVGRQVHVHGAVTKVSAEETADYWSKRPRGSQLGAWASQQSLPIASRAALMQQLTEVTERFADVEEIPVPPHWGGYLIAAEVVEFWQGRENRVHNRIRVCGGQVERLQP</sequence>
<dbReference type="EC" id="1.4.3.5" evidence="1"/>
<dbReference type="EMBL" id="CP000511">
    <property type="protein sequence ID" value="ABM15796.1"/>
    <property type="molecule type" value="Genomic_DNA"/>
</dbReference>
<dbReference type="SMR" id="A1TF46"/>
<dbReference type="STRING" id="350058.Mvan_5024"/>
<dbReference type="KEGG" id="mva:Mvan_5024"/>
<dbReference type="eggNOG" id="COG0259">
    <property type="taxonomic scope" value="Bacteria"/>
</dbReference>
<dbReference type="HOGENOM" id="CLU_032263_2_2_11"/>
<dbReference type="UniPathway" id="UPA01068">
    <property type="reaction ID" value="UER00304"/>
</dbReference>
<dbReference type="UniPathway" id="UPA01068">
    <property type="reaction ID" value="UER00305"/>
</dbReference>
<dbReference type="Proteomes" id="UP000009159">
    <property type="component" value="Chromosome"/>
</dbReference>
<dbReference type="GO" id="GO:0010181">
    <property type="term" value="F:FMN binding"/>
    <property type="evidence" value="ECO:0007669"/>
    <property type="project" value="UniProtKB-UniRule"/>
</dbReference>
<dbReference type="GO" id="GO:0004733">
    <property type="term" value="F:pyridoxamine phosphate oxidase activity"/>
    <property type="evidence" value="ECO:0007669"/>
    <property type="project" value="UniProtKB-UniRule"/>
</dbReference>
<dbReference type="GO" id="GO:0008615">
    <property type="term" value="P:pyridoxine biosynthetic process"/>
    <property type="evidence" value="ECO:0007669"/>
    <property type="project" value="UniProtKB-KW"/>
</dbReference>
<dbReference type="Gene3D" id="2.30.110.10">
    <property type="entry name" value="Electron Transport, Fmn-binding Protein, Chain A"/>
    <property type="match status" value="1"/>
</dbReference>
<dbReference type="HAMAP" id="MF_01629">
    <property type="entry name" value="PdxH"/>
    <property type="match status" value="1"/>
</dbReference>
<dbReference type="InterPro" id="IPR000659">
    <property type="entry name" value="Pyridox_Oxase"/>
</dbReference>
<dbReference type="InterPro" id="IPR019740">
    <property type="entry name" value="Pyridox_Oxase_CS"/>
</dbReference>
<dbReference type="InterPro" id="IPR011576">
    <property type="entry name" value="Pyridox_Oxase_N"/>
</dbReference>
<dbReference type="InterPro" id="IPR019576">
    <property type="entry name" value="Pyridoxamine_oxidase_dimer_C"/>
</dbReference>
<dbReference type="InterPro" id="IPR012349">
    <property type="entry name" value="Split_barrel_FMN-bd"/>
</dbReference>
<dbReference type="NCBIfam" id="TIGR00558">
    <property type="entry name" value="pdxH"/>
    <property type="match status" value="1"/>
</dbReference>
<dbReference type="NCBIfam" id="NF004231">
    <property type="entry name" value="PRK05679.1"/>
    <property type="match status" value="1"/>
</dbReference>
<dbReference type="PANTHER" id="PTHR10851:SF0">
    <property type="entry name" value="PYRIDOXINE-5'-PHOSPHATE OXIDASE"/>
    <property type="match status" value="1"/>
</dbReference>
<dbReference type="PANTHER" id="PTHR10851">
    <property type="entry name" value="PYRIDOXINE-5-PHOSPHATE OXIDASE"/>
    <property type="match status" value="1"/>
</dbReference>
<dbReference type="Pfam" id="PF10590">
    <property type="entry name" value="PNP_phzG_C"/>
    <property type="match status" value="1"/>
</dbReference>
<dbReference type="Pfam" id="PF01243">
    <property type="entry name" value="PNPOx_N"/>
    <property type="match status" value="1"/>
</dbReference>
<dbReference type="PIRSF" id="PIRSF000190">
    <property type="entry name" value="Pyd_amn-ph_oxd"/>
    <property type="match status" value="1"/>
</dbReference>
<dbReference type="SUPFAM" id="SSF50475">
    <property type="entry name" value="FMN-binding split barrel"/>
    <property type="match status" value="1"/>
</dbReference>
<dbReference type="PROSITE" id="PS01064">
    <property type="entry name" value="PYRIDOX_OXIDASE"/>
    <property type="match status" value="1"/>
</dbReference>
<evidence type="ECO:0000255" key="1">
    <source>
        <dbReference type="HAMAP-Rule" id="MF_01629"/>
    </source>
</evidence>
<protein>
    <recommendedName>
        <fullName evidence="1">Pyridoxine/pyridoxamine 5'-phosphate oxidase</fullName>
        <ecNumber evidence="1">1.4.3.5</ecNumber>
    </recommendedName>
    <alternativeName>
        <fullName evidence="1">PNP/PMP oxidase</fullName>
        <shortName evidence="1">PNPOx</shortName>
    </alternativeName>
    <alternativeName>
        <fullName evidence="1">Pyridoxal 5'-phosphate synthase</fullName>
    </alternativeName>
</protein>
<organism>
    <name type="scientific">Mycolicibacterium vanbaalenii (strain DSM 7251 / JCM 13017 / BCRC 16820 / KCTC 9966 / NRRL B-24157 / PYR-1)</name>
    <name type="common">Mycobacterium vanbaalenii</name>
    <dbReference type="NCBI Taxonomy" id="350058"/>
    <lineage>
        <taxon>Bacteria</taxon>
        <taxon>Bacillati</taxon>
        <taxon>Actinomycetota</taxon>
        <taxon>Actinomycetes</taxon>
        <taxon>Mycobacteriales</taxon>
        <taxon>Mycobacteriaceae</taxon>
        <taxon>Mycolicibacterium</taxon>
    </lineage>
</organism>
<proteinExistence type="inferred from homology"/>
<gene>
    <name evidence="1" type="primary">pdxH</name>
    <name type="ordered locus">Mvan_5024</name>
</gene>
<keyword id="KW-0285">Flavoprotein</keyword>
<keyword id="KW-0288">FMN</keyword>
<keyword id="KW-0560">Oxidoreductase</keyword>
<keyword id="KW-0664">Pyridoxine biosynthesis</keyword>
<reference key="1">
    <citation type="submission" date="2006-12" db="EMBL/GenBank/DDBJ databases">
        <title>Complete sequence of Mycobacterium vanbaalenii PYR-1.</title>
        <authorList>
            <consortium name="US DOE Joint Genome Institute"/>
            <person name="Copeland A."/>
            <person name="Lucas S."/>
            <person name="Lapidus A."/>
            <person name="Barry K."/>
            <person name="Detter J.C."/>
            <person name="Glavina del Rio T."/>
            <person name="Hammon N."/>
            <person name="Israni S."/>
            <person name="Dalin E."/>
            <person name="Tice H."/>
            <person name="Pitluck S."/>
            <person name="Singan V."/>
            <person name="Schmutz J."/>
            <person name="Larimer F."/>
            <person name="Land M."/>
            <person name="Hauser L."/>
            <person name="Kyrpides N."/>
            <person name="Anderson I.J."/>
            <person name="Miller C."/>
            <person name="Richardson P."/>
        </authorList>
    </citation>
    <scope>NUCLEOTIDE SEQUENCE [LARGE SCALE GENOMIC DNA]</scope>
    <source>
        <strain>DSM 7251 / JCM 13017 / BCRC 16820 / KCTC 9966 / NRRL B-24157 / PYR-1</strain>
    </source>
</reference>